<protein>
    <recommendedName>
        <fullName evidence="2">Outer surface protein A</fullName>
    </recommendedName>
</protein>
<geneLocation type="plasmid">
    <name>lp54</name>
</geneLocation>
<proteinExistence type="evidence at protein level"/>
<feature type="signal peptide" evidence="1">
    <location>
        <begin position="1"/>
        <end position="16"/>
    </location>
</feature>
<feature type="chain" id="PRO_0000018076" description="Outer surface protein A" evidence="1">
    <location>
        <begin position="17"/>
        <end position="274"/>
    </location>
</feature>
<feature type="lipid moiety-binding region" description="N-palmitoyl cysteine" evidence="1">
    <location>
        <position position="17"/>
    </location>
</feature>
<feature type="lipid moiety-binding region" description="S-diacylglycerol cysteine" evidence="1">
    <location>
        <position position="17"/>
    </location>
</feature>
<feature type="sequence variant" description="In strain: Goe 2, G25, PWudll and TN.">
    <original>D</original>
    <variation>E</variation>
    <location>
        <position position="55"/>
    </location>
</feature>
<feature type="sequence variant" description="In strain: Goe 2, G25, PWudll and TN.">
    <original>N</original>
    <variation>K</variation>
    <location>
        <position position="216"/>
    </location>
</feature>
<feature type="sequence variant" description="In strain: Goe 2, G25, PWudll and TN.">
    <original>S</original>
    <variation>T</variation>
    <location>
        <position position="221"/>
    </location>
</feature>
<feature type="sequence variant" description="In strain: Goe 2, G25, PWudll and TN.">
    <original>A</original>
    <variation>D</variation>
    <location>
        <position position="271"/>
    </location>
</feature>
<gene>
    <name evidence="2" type="primary">ospA</name>
</gene>
<comment type="subcellular location">
    <subcellularLocation>
        <location evidence="4 5">Cell outer membrane</location>
        <topology evidence="1">Lipid-anchor</topology>
    </subcellularLocation>
    <subcellularLocation>
        <location evidence="4 5">Cell surface</location>
    </subcellularLocation>
</comment>
<comment type="miscellaneous">
    <text>The sequence shown is that of strain B29.</text>
</comment>
<comment type="similarity">
    <text evidence="3">Belongs to the OspA lipoprotein family.</text>
</comment>
<dbReference type="EMBL" id="M88764">
    <property type="protein sequence ID" value="AAA18508.1"/>
    <property type="molecule type" value="Unassigned_DNA"/>
</dbReference>
<dbReference type="EMBL" id="X60300">
    <property type="protein sequence ID" value="CAA42842.1"/>
    <property type="molecule type" value="Genomic_DNA"/>
</dbReference>
<dbReference type="EMBL" id="L19702">
    <property type="protein sequence ID" value="AAA88846.1"/>
    <property type="molecule type" value="Genomic_DNA"/>
</dbReference>
<dbReference type="EMBL" id="Z29086">
    <property type="protein sequence ID" value="CAA82328.1"/>
    <property type="molecule type" value="Genomic_DNA"/>
</dbReference>
<dbReference type="EMBL" id="X80252">
    <property type="protein sequence ID" value="CAA56545.1"/>
    <property type="molecule type" value="Genomic_DNA"/>
</dbReference>
<dbReference type="EMBL" id="X80253">
    <property type="protein sequence ID" value="CAA56546.1"/>
    <property type="molecule type" value="Genomic_DNA"/>
</dbReference>
<dbReference type="PIR" id="E49209">
    <property type="entry name" value="E49209"/>
</dbReference>
<dbReference type="SMR" id="Q09086"/>
<dbReference type="GO" id="GO:0009279">
    <property type="term" value="C:cell outer membrane"/>
    <property type="evidence" value="ECO:0007669"/>
    <property type="project" value="UniProtKB-SubCell"/>
</dbReference>
<dbReference type="GO" id="GO:0009986">
    <property type="term" value="C:cell surface"/>
    <property type="evidence" value="ECO:0007669"/>
    <property type="project" value="UniProtKB-SubCell"/>
</dbReference>
<dbReference type="FunFam" id="2.40.128.160:FF:000001">
    <property type="entry name" value="Outer surface protein A"/>
    <property type="match status" value="1"/>
</dbReference>
<dbReference type="Gene3D" id="3.90.930.1">
    <property type="match status" value="1"/>
</dbReference>
<dbReference type="Gene3D" id="2.40.128.160">
    <property type="entry name" value="C1 set domains (antibody constant domain-like)"/>
    <property type="match status" value="1"/>
</dbReference>
<dbReference type="InterPro" id="IPR001809">
    <property type="entry name" value="OM_lipoprot_Borrelia"/>
</dbReference>
<dbReference type="InterPro" id="IPR023322">
    <property type="entry name" value="OM_lipoprot_dom_sf"/>
</dbReference>
<dbReference type="Pfam" id="PF00820">
    <property type="entry name" value="Lipoprotein_1"/>
    <property type="match status" value="1"/>
</dbReference>
<dbReference type="PRINTS" id="PR00968">
    <property type="entry name" value="OUTRSURFACE"/>
</dbReference>
<dbReference type="SUPFAM" id="SSF51087">
    <property type="entry name" value="Outer surface protein"/>
    <property type="match status" value="1"/>
</dbReference>
<dbReference type="PROSITE" id="PS51257">
    <property type="entry name" value="PROKAR_LIPOPROTEIN"/>
    <property type="match status" value="1"/>
</dbReference>
<organism>
    <name type="scientific">Borreliella burgdorferi</name>
    <name type="common">Lyme disease spirochete</name>
    <name type="synonym">Borrelia burgdorferi</name>
    <dbReference type="NCBI Taxonomy" id="139"/>
    <lineage>
        <taxon>Bacteria</taxon>
        <taxon>Pseudomonadati</taxon>
        <taxon>Spirochaetota</taxon>
        <taxon>Spirochaetia</taxon>
        <taxon>Spirochaetales</taxon>
        <taxon>Borreliaceae</taxon>
        <taxon>Borreliella</taxon>
    </lineage>
</organism>
<name>OSPA3_BORBG</name>
<reference evidence="6" key="1">
    <citation type="journal article" date="1992" name="Gene">
        <title>Sequence of the complete osp operon encoding two major outer membrane proteins of a European Borrelia burgdorferi isolate (B29).</title>
        <authorList>
            <person name="Fellinger W."/>
            <person name="Redl B."/>
            <person name="Stoeffler G."/>
        </authorList>
    </citation>
    <scope>NUCLEOTIDE SEQUENCE [GENOMIC DNA]</scope>
    <source>
        <strain>B29</strain>
    </source>
</reference>
<reference key="2">
    <citation type="journal article" date="1992" name="Infect. Immun.">
        <title>Evaluation of genetic divergence among Borrelia burgdorferi isolates by use of OspA, fla, HSP60, and HSP70 gene probes.</title>
        <authorList>
            <person name="Wallich R."/>
            <person name="Helmes C."/>
            <person name="Schaible U.E."/>
            <person name="Lobet Y."/>
            <person name="Moter S.E."/>
            <person name="Kramer M.D."/>
            <person name="Simon M.M."/>
        </authorList>
    </citation>
    <scope>NUCLEOTIDE SEQUENCE [GENOMIC DNA]</scope>
    <source>
        <strain>B927</strain>
    </source>
</reference>
<reference evidence="8" key="3">
    <citation type="journal article" date="1992" name="Infect. Immun.">
        <title>Nucleotide sequence of the ospAB operon of a Borrelia burgdorferi strain expressing OspA but not OspB.</title>
        <authorList>
            <person name="Eiffert H."/>
            <person name="Ohlenbusch A."/>
            <person name="Fehling W."/>
            <person name="Lotter H."/>
            <person name="Thomssen R."/>
        </authorList>
    </citation>
    <scope>NUCLEOTIDE SEQUENCE [GENOMIC DNA]</scope>
    <scope>PARTIAL PROTEIN SEQUENCE</scope>
    <source>
        <strain>Goe 2</strain>
    </source>
</reference>
<reference evidence="7" key="4">
    <citation type="journal article" date="1992" name="Curr. Commun. Cell Mol. Biol.">
        <title>Molecular analysis of the major outer surface protein locus from a divergent Borrelia burgdorferi isolate from Europe.</title>
        <authorList>
            <person name="Rosa P.A."/>
            <person name="Hogan D."/>
            <person name="Margolis N."/>
        </authorList>
    </citation>
    <scope>NUCLEOTIDE SEQUENCE [GENOMIC DNA]</scope>
    <source>
        <strain>G2</strain>
    </source>
</reference>
<reference evidence="11" key="5">
    <citation type="journal article" date="1995" name="DNA Seq.">
        <title>Assignment of Borrelia burgdorferi strains G25 and VS461 to the Borrelia garinii and Borrelia afzelii genospecies, respectively: a comparison of OspA protein sequences.</title>
        <authorList>
            <person name="Godfroid E."/>
            <person name="Ben-Messaoud A."/>
            <person name="Poliszczak A."/>
            <person name="Lobet Y."/>
            <person name="Bollen A."/>
        </authorList>
    </citation>
    <scope>NUCLEOTIDE SEQUENCE [GENOMIC DNA]</scope>
    <source>
        <strain>G25</strain>
    </source>
</reference>
<reference evidence="9 10" key="6">
    <citation type="journal article" date="1995" name="Med. Microbiol. Immunol.">
        <title>Sequence analysis of ospA genes shows homogeneity within Borrelia burgdorferi sensu stricto and Borrelia afzelii strains but reveals major subgroups within the Borrelia garinii species.</title>
        <authorList>
            <person name="Will G."/>
            <person name="Jauris-Heipke S."/>
            <person name="Schwab E."/>
            <person name="Busch U."/>
            <person name="Roessler D."/>
            <person name="Soutschek E."/>
            <person name="Wilske B."/>
            <person name="Preac-Mursic V."/>
        </authorList>
    </citation>
    <scope>NUCLEOTIDE SEQUENCE [GENOMIC DNA]</scope>
    <source>
        <strain>PWudll</strain>
        <strain>TN</strain>
    </source>
</reference>
<keyword id="KW-0998">Cell outer membrane</keyword>
<keyword id="KW-0903">Direct protein sequencing</keyword>
<keyword id="KW-0449">Lipoprotein</keyword>
<keyword id="KW-0472">Membrane</keyword>
<keyword id="KW-0564">Palmitate</keyword>
<keyword id="KW-0614">Plasmid</keyword>
<keyword id="KW-0732">Signal</keyword>
<evidence type="ECO:0000255" key="1">
    <source>
        <dbReference type="PROSITE-ProRule" id="PRU00303"/>
    </source>
</evidence>
<evidence type="ECO:0000303" key="2">
    <source>
    </source>
</evidence>
<evidence type="ECO:0000305" key="3"/>
<evidence type="ECO:0000305" key="4">
    <source>
    </source>
</evidence>
<evidence type="ECO:0000305" key="5">
    <source>
    </source>
</evidence>
<evidence type="ECO:0000312" key="6">
    <source>
        <dbReference type="EMBL" id="AAA18508.1"/>
    </source>
</evidence>
<evidence type="ECO:0000312" key="7">
    <source>
        <dbReference type="EMBL" id="AAA88846.1"/>
    </source>
</evidence>
<evidence type="ECO:0000312" key="8">
    <source>
        <dbReference type="EMBL" id="CAA42842.1"/>
    </source>
</evidence>
<evidence type="ECO:0000312" key="9">
    <source>
        <dbReference type="EMBL" id="CAA56545.1"/>
    </source>
</evidence>
<evidence type="ECO:0000312" key="10">
    <source>
        <dbReference type="EMBL" id="CAA56546.1"/>
    </source>
</evidence>
<evidence type="ECO:0000312" key="11">
    <source>
        <dbReference type="EMBL" id="CAA82328.1"/>
    </source>
</evidence>
<sequence length="274" mass="29591">MKKYLLGIGLILALIACKQNVSSLDEKNSVSVDLPGGMTVLVSKEKDKDGKYSLDATVDKLELKGTSDKNNGSGTLEGEKTDKSKVKLTIADDLSQTKFEIFKEDGKTLVSKKVTLKDKSSTEEKFNEKGETSEKTIVRANGTRLEYTDIKSDGSGKAKEVLKDFTLEGTLAADGKTTLKVTEGTVVLSKNILKSGEITVALDDSDTTQATKKTGNWDSKSSTLTISVNSQKTKNLVFTKEDTITVQKYDSAGTNLEGKAVEITTLKELKAALK</sequence>
<accession>Q09086</accession>